<evidence type="ECO:0000250" key="1"/>
<evidence type="ECO:0000250" key="2">
    <source>
        <dbReference type="UniProtKB" id="O15392"/>
    </source>
</evidence>
<evidence type="ECO:0000250" key="3">
    <source>
        <dbReference type="UniProtKB" id="Q50L39"/>
    </source>
</evidence>
<evidence type="ECO:0000250" key="4">
    <source>
        <dbReference type="UniProtKB" id="Q804H7"/>
    </source>
</evidence>
<evidence type="ECO:0000255" key="5"/>
<evidence type="ECO:0000255" key="6">
    <source>
        <dbReference type="PROSITE-ProRule" id="PRU00029"/>
    </source>
</evidence>
<evidence type="ECO:0000305" key="7"/>
<evidence type="ECO:0000312" key="8">
    <source>
        <dbReference type="EMBL" id="AAI23072.1"/>
    </source>
</evidence>
<evidence type="ECO:0000312" key="9">
    <source>
        <dbReference type="EMBL" id="CAJ83536.1"/>
    </source>
</evidence>
<sequence>MSASLISALPPCGNEPPMPDEWRLYRLATRLSTFANWPFTEDCACTPERMAEAGFVHCPSDNSPDVVKCFFCLKELEGWQPEDDPMDEHKKHSPSCLFIALKKKAEELTLSEFLKLDLERTKIKMQKQMNQHIENFQAKANVVRGHLEKLDADETQ</sequence>
<reference evidence="9" key="1">
    <citation type="submission" date="2006-10" db="EMBL/GenBank/DDBJ databases">
        <authorList>
            <consortium name="Sanger Xenopus tropicalis EST/cDNA project"/>
        </authorList>
    </citation>
    <scope>NUCLEOTIDE SEQUENCE [LARGE SCALE MRNA]</scope>
    <source>
        <tissue evidence="9">Gastrula</tissue>
    </source>
</reference>
<reference evidence="9" key="2">
    <citation type="submission" date="2006-09" db="EMBL/GenBank/DDBJ databases">
        <authorList>
            <consortium name="NIH - Xenopus Gene Collection (XGC) project"/>
        </authorList>
    </citation>
    <scope>NUCLEOTIDE SEQUENCE [LARGE SCALE MRNA]</scope>
    <source>
        <strain evidence="8">N6</strain>
        <tissue evidence="8">Ovary</tissue>
    </source>
</reference>
<proteinExistence type="evidence at transcript level"/>
<accession>Q28ER3</accession>
<organism>
    <name type="scientific">Xenopus tropicalis</name>
    <name type="common">Western clawed frog</name>
    <name type="synonym">Silurana tropicalis</name>
    <dbReference type="NCBI Taxonomy" id="8364"/>
    <lineage>
        <taxon>Eukaryota</taxon>
        <taxon>Metazoa</taxon>
        <taxon>Chordata</taxon>
        <taxon>Craniata</taxon>
        <taxon>Vertebrata</taxon>
        <taxon>Euteleostomi</taxon>
        <taxon>Amphibia</taxon>
        <taxon>Batrachia</taxon>
        <taxon>Anura</taxon>
        <taxon>Pipoidea</taxon>
        <taxon>Pipidae</taxon>
        <taxon>Xenopodinae</taxon>
        <taxon>Xenopus</taxon>
        <taxon>Silurana</taxon>
    </lineage>
</organism>
<comment type="function">
    <text evidence="3 4">Component of the chromosomal passenger complex (CPC), a complex that acts as a key regulator of mitosis. The CPC complex has essential functions at the centromere in ensuring correct chromosome alignment and segregation and is required for chromatin-induced microtubule stabilization and spindle assembly. Does not appear to exhibit anti-apoptotic activity. Plays a role in increasing blood vessel size during development (By similarity).</text>
</comment>
<comment type="subunit">
    <text evidence="1">Component of the CPC at least composed of survivin/birc5, incenp, cdca8/borealin and/or cdca9/dasra-A, and aurkb/aurora-B. Interacts directly with incenp (via N-terminus). Interacts with rxra; the interaction is stronger in the absence of 9-cis retinoic acids (By similarity).</text>
</comment>
<comment type="subcellular location">
    <subcellularLocation>
        <location evidence="2">Cytoplasm</location>
    </subcellularLocation>
    <subcellularLocation>
        <location evidence="2">Nucleus</location>
    </subcellularLocation>
    <subcellularLocation>
        <location evidence="2">Chromosome</location>
        <location evidence="2">Centromere</location>
    </subcellularLocation>
    <subcellularLocation>
        <location evidence="1">Cytoplasm</location>
        <location evidence="1">Cytoskeleton</location>
        <location evidence="1">Spindle</location>
    </subcellularLocation>
    <text evidence="2">Localizes on chromosome arms and inner centromeres from prophase through metaphase and then transferring to the spindle midzone and midbody from anaphase through cytokinesis.</text>
</comment>
<comment type="domain">
    <text evidence="3">The BIR2 domain is required for vascular development.</text>
</comment>
<comment type="PTM">
    <text evidence="2">Ubiquitination is required for centrosome-targeting.</text>
</comment>
<comment type="similarity">
    <text evidence="5">Belongs to the IAP family.</text>
</comment>
<comment type="sequence caution" evidence="7">
    <conflict type="erroneous initiation">
        <sequence resource="EMBL-CDS" id="AAI23072"/>
    </conflict>
    <text>Truncated N-terminus.</text>
</comment>
<comment type="sequence caution" evidence="7">
    <conflict type="erroneous initiation">
        <sequence resource="EMBL-CDS" id="CAJ83536"/>
    </conflict>
    <text>Truncated N-terminus.</text>
</comment>
<comment type="sequence caution" evidence="7">
    <conflict type="erroneous initiation">
        <sequence resource="EMBL-CDS" id="CAJ83890"/>
    </conflict>
    <text>Truncated N-terminus.</text>
</comment>
<gene>
    <name type="primary">birc5.2</name>
    <name type="ORF">TGas042b13.1</name>
    <name type="ORF">TGas101d21.1</name>
</gene>
<name>BIR52_XENTR</name>
<feature type="chain" id="PRO_0000382466" description="Baculoviral IAP repeat-containing protein 5.2">
    <location>
        <begin position="1"/>
        <end position="156"/>
    </location>
</feature>
<feature type="repeat" description="BIR" evidence="5">
    <location>
        <begin position="30"/>
        <end position="100"/>
    </location>
</feature>
<feature type="binding site" evidence="2 6">
    <location>
        <position position="69"/>
    </location>
    <ligand>
        <name>Zn(2+)</name>
        <dbReference type="ChEBI" id="CHEBI:29105"/>
    </ligand>
</feature>
<feature type="binding site" evidence="2 6">
    <location>
        <position position="72"/>
    </location>
    <ligand>
        <name>Zn(2+)</name>
        <dbReference type="ChEBI" id="CHEBI:29105"/>
    </ligand>
</feature>
<feature type="binding site" evidence="2 6">
    <location>
        <position position="89"/>
    </location>
    <ligand>
        <name>Zn(2+)</name>
        <dbReference type="ChEBI" id="CHEBI:29105"/>
    </ligand>
</feature>
<feature type="binding site" evidence="2 6">
    <location>
        <position position="96"/>
    </location>
    <ligand>
        <name>Zn(2+)</name>
        <dbReference type="ChEBI" id="CHEBI:29105"/>
    </ligand>
</feature>
<feature type="modified residue" description="Phosphothreonine; by CDK1" evidence="1">
    <location>
        <position position="46"/>
    </location>
</feature>
<keyword id="KW-0131">Cell cycle</keyword>
<keyword id="KW-0132">Cell division</keyword>
<keyword id="KW-0137">Centromere</keyword>
<keyword id="KW-0158">Chromosome</keyword>
<keyword id="KW-0159">Chromosome partition</keyword>
<keyword id="KW-0963">Cytoplasm</keyword>
<keyword id="KW-0206">Cytoskeleton</keyword>
<keyword id="KW-0479">Metal-binding</keyword>
<keyword id="KW-0498">Mitosis</keyword>
<keyword id="KW-0539">Nucleus</keyword>
<keyword id="KW-0597">Phosphoprotein</keyword>
<keyword id="KW-1185">Reference proteome</keyword>
<keyword id="KW-0832">Ubl conjugation</keyword>
<keyword id="KW-0862">Zinc</keyword>
<dbReference type="EMBL" id="CR848111">
    <property type="protein sequence ID" value="CAJ83536.1"/>
    <property type="status" value="ALT_INIT"/>
    <property type="molecule type" value="mRNA"/>
</dbReference>
<dbReference type="EMBL" id="CR761512">
    <property type="protein sequence ID" value="CAJ83890.1"/>
    <property type="status" value="ALT_INIT"/>
    <property type="molecule type" value="mRNA"/>
</dbReference>
<dbReference type="EMBL" id="BC123071">
    <property type="protein sequence ID" value="AAI23072.1"/>
    <property type="status" value="ALT_INIT"/>
    <property type="molecule type" value="mRNA"/>
</dbReference>
<dbReference type="SMR" id="Q28ER3"/>
<dbReference type="FunCoup" id="Q28ER3">
    <property type="interactions" value="1492"/>
</dbReference>
<dbReference type="STRING" id="8364.ENSXETP00000025558"/>
<dbReference type="MEROPS" id="I32.005"/>
<dbReference type="PaxDb" id="8364-ENSXETP00000021977"/>
<dbReference type="DNASU" id="733575"/>
<dbReference type="KEGG" id="xtr:733575"/>
<dbReference type="AGR" id="Xenbase:XB-GENE-966741"/>
<dbReference type="CTD" id="332"/>
<dbReference type="Xenbase" id="XB-GENE-966741">
    <property type="gene designation" value="birc5l"/>
</dbReference>
<dbReference type="eggNOG" id="KOG1101">
    <property type="taxonomic scope" value="Eukaryota"/>
</dbReference>
<dbReference type="HOGENOM" id="CLU_016347_0_1_1"/>
<dbReference type="InParanoid" id="Q28ER3"/>
<dbReference type="OrthoDB" id="2196114at2759"/>
<dbReference type="TreeFam" id="TF342652"/>
<dbReference type="Reactome" id="R-XTR-141444">
    <property type="pathway name" value="Amplification of signal from unattached kinetochores via a MAD2 inhibitory signal"/>
</dbReference>
<dbReference type="Reactome" id="R-XTR-2467813">
    <property type="pathway name" value="Separation of Sister Chromatids"/>
</dbReference>
<dbReference type="Reactome" id="R-XTR-2500257">
    <property type="pathway name" value="Resolution of Sister Chromatid Cohesion"/>
</dbReference>
<dbReference type="Reactome" id="R-XTR-4615885">
    <property type="pathway name" value="SUMOylation of DNA replication proteins"/>
</dbReference>
<dbReference type="Reactome" id="R-XTR-5663220">
    <property type="pathway name" value="RHO GTPases Activate Formins"/>
</dbReference>
<dbReference type="Reactome" id="R-XTR-68877">
    <property type="pathway name" value="Mitotic Prometaphase"/>
</dbReference>
<dbReference type="Reactome" id="R-XTR-8951664">
    <property type="pathway name" value="Neddylation"/>
</dbReference>
<dbReference type="Reactome" id="R-XTR-9648025">
    <property type="pathway name" value="EML4 and NUDC in mitotic spindle formation"/>
</dbReference>
<dbReference type="Proteomes" id="UP000008143">
    <property type="component" value="Chromosome 10"/>
</dbReference>
<dbReference type="GO" id="GO:0032133">
    <property type="term" value="C:chromosome passenger complex"/>
    <property type="evidence" value="ECO:0000250"/>
    <property type="project" value="UniProtKB"/>
</dbReference>
<dbReference type="GO" id="GO:0005737">
    <property type="term" value="C:cytoplasm"/>
    <property type="evidence" value="ECO:0007669"/>
    <property type="project" value="UniProtKB-SubCell"/>
</dbReference>
<dbReference type="GO" id="GO:0000776">
    <property type="term" value="C:kinetochore"/>
    <property type="evidence" value="ECO:0000250"/>
    <property type="project" value="UniProtKB"/>
</dbReference>
<dbReference type="GO" id="GO:0030496">
    <property type="term" value="C:midbody"/>
    <property type="evidence" value="ECO:0000250"/>
    <property type="project" value="UniProtKB"/>
</dbReference>
<dbReference type="GO" id="GO:0005634">
    <property type="term" value="C:nucleus"/>
    <property type="evidence" value="ECO:0000250"/>
    <property type="project" value="UniProtKB"/>
</dbReference>
<dbReference type="GO" id="GO:0005819">
    <property type="term" value="C:spindle"/>
    <property type="evidence" value="ECO:0007669"/>
    <property type="project" value="UniProtKB-SubCell"/>
</dbReference>
<dbReference type="GO" id="GO:0046872">
    <property type="term" value="F:metal ion binding"/>
    <property type="evidence" value="ECO:0007669"/>
    <property type="project" value="UniProtKB-KW"/>
</dbReference>
<dbReference type="GO" id="GO:0046965">
    <property type="term" value="F:nuclear retinoid X receptor binding"/>
    <property type="evidence" value="ECO:0000250"/>
    <property type="project" value="UniProtKB"/>
</dbReference>
<dbReference type="GO" id="GO:0051301">
    <property type="term" value="P:cell division"/>
    <property type="evidence" value="ECO:0007669"/>
    <property type="project" value="UniProtKB-KW"/>
</dbReference>
<dbReference type="GO" id="GO:0007059">
    <property type="term" value="P:chromosome segregation"/>
    <property type="evidence" value="ECO:0007669"/>
    <property type="project" value="UniProtKB-KW"/>
</dbReference>
<dbReference type="GO" id="GO:0043066">
    <property type="term" value="P:negative regulation of apoptotic process"/>
    <property type="evidence" value="ECO:0000250"/>
    <property type="project" value="UniProtKB"/>
</dbReference>
<dbReference type="GO" id="GO:0045892">
    <property type="term" value="P:negative regulation of DNA-templated transcription"/>
    <property type="evidence" value="ECO:0000250"/>
    <property type="project" value="UniProtKB"/>
</dbReference>
<dbReference type="GO" id="GO:0001944">
    <property type="term" value="P:vasculature development"/>
    <property type="evidence" value="ECO:0000250"/>
    <property type="project" value="UniProtKB"/>
</dbReference>
<dbReference type="CDD" id="cd00022">
    <property type="entry name" value="BIR"/>
    <property type="match status" value="1"/>
</dbReference>
<dbReference type="FunFam" id="1.10.1170.10:FF:000009">
    <property type="entry name" value="Baculoviral IAP repeat-containing protein 5"/>
    <property type="match status" value="1"/>
</dbReference>
<dbReference type="Gene3D" id="1.10.1170.10">
    <property type="entry name" value="Inhibitor Of Apoptosis Protein (2mihbC-IAP-1), Chain A"/>
    <property type="match status" value="1"/>
</dbReference>
<dbReference type="InterPro" id="IPR051190">
    <property type="entry name" value="Baculoviral_IAP"/>
</dbReference>
<dbReference type="InterPro" id="IPR001370">
    <property type="entry name" value="BIR_rpt"/>
</dbReference>
<dbReference type="PANTHER" id="PTHR46771:SF3">
    <property type="entry name" value="BACULOVIRAL IAP REPEAT-CONTAINING PROTEIN 5"/>
    <property type="match status" value="1"/>
</dbReference>
<dbReference type="PANTHER" id="PTHR46771">
    <property type="entry name" value="DETERIN"/>
    <property type="match status" value="1"/>
</dbReference>
<dbReference type="Pfam" id="PF00653">
    <property type="entry name" value="BIR"/>
    <property type="match status" value="1"/>
</dbReference>
<dbReference type="SMART" id="SM00238">
    <property type="entry name" value="BIR"/>
    <property type="match status" value="1"/>
</dbReference>
<dbReference type="SUPFAM" id="SSF57924">
    <property type="entry name" value="Inhibitor of apoptosis (IAP) repeat"/>
    <property type="match status" value="1"/>
</dbReference>
<dbReference type="PROSITE" id="PS50143">
    <property type="entry name" value="BIR_REPEAT_2"/>
    <property type="match status" value="1"/>
</dbReference>
<protein>
    <recommendedName>
        <fullName>Baculoviral IAP repeat-containing protein 5.2</fullName>
    </recommendedName>
    <alternativeName>
        <fullName evidence="3">Survivin 2</fullName>
        <shortName evidence="9">Survivin</shortName>
    </alternativeName>
</protein>